<sequence length="484" mass="56379">MYKGWDSEALSIQSEIVNEILLYCYLTPQPPIPSETTTATSPTNIENEISNLESSENLEELKRLSVALNIDRRCNICSIVNLCLKQNKSWIYDYSLLCYKCNYAPKTPLSLLIVSAEFIMLIRERFPNINFDGLFQNNIVSIFDFHVHFFIHRCFANTVNDHIQSENITLNHMAIIRSTLLKEDSIPHIKIKKFLTKKMNPKKTQSPELNKKLTVPMKTRFTTLLFYMWSGTNVFDRVPFTDLTIRKHRFIKNLYSNKTDIELTAGPILLAQIPFSITKNKTTSVCLLCELMAASKQDYLFLKYLHQSIMDYCQNNLKMIDRVQFVIADIFEKTKIHMHVKNLSDYSKAIFDNEFSFSDDNFTLDTHVYLILRQTGTVGVYKHFFCDPLCLANCKTINPEVLFNTTDAGEIQDLKVTICYRNEYLSIVEKHVWLAIHLFKAFQIIKPNHKNKTQIAEFLKDFTNLLALHHFDIVDPIFTVNYYV</sequence>
<protein>
    <recommendedName>
        <fullName>Packaging protein UL32 homolog</fullName>
    </recommendedName>
</protein>
<dbReference type="EMBL" id="AF157706">
    <property type="protein sequence ID" value="AAD49650.1"/>
    <property type="molecule type" value="Genomic_DNA"/>
</dbReference>
<dbReference type="RefSeq" id="NP_050217.1">
    <property type="nucleotide sequence ID" value="NC_000898.1"/>
</dbReference>
<dbReference type="SMR" id="Q9QJ33"/>
<dbReference type="DNASU" id="1497038"/>
<dbReference type="GeneID" id="1497038"/>
<dbReference type="KEGG" id="vg:1497038"/>
<dbReference type="Proteomes" id="UP000006930">
    <property type="component" value="Segment"/>
</dbReference>
<dbReference type="GO" id="GO:0030430">
    <property type="term" value="C:host cell cytoplasm"/>
    <property type="evidence" value="ECO:0007669"/>
    <property type="project" value="UniProtKB-SubCell"/>
</dbReference>
<dbReference type="GO" id="GO:0042025">
    <property type="term" value="C:host cell nucleus"/>
    <property type="evidence" value="ECO:0007669"/>
    <property type="project" value="UniProtKB-SubCell"/>
</dbReference>
<dbReference type="GO" id="GO:0019031">
    <property type="term" value="C:viral envelope"/>
    <property type="evidence" value="ECO:0007669"/>
    <property type="project" value="InterPro"/>
</dbReference>
<dbReference type="GO" id="GO:0008270">
    <property type="term" value="F:zinc ion binding"/>
    <property type="evidence" value="ECO:0007669"/>
    <property type="project" value="UniProtKB-KW"/>
</dbReference>
<dbReference type="InterPro" id="IPR002597">
    <property type="entry name" value="Herpes_env"/>
</dbReference>
<dbReference type="Pfam" id="PF01673">
    <property type="entry name" value="Herpes_env"/>
    <property type="match status" value="2"/>
</dbReference>
<dbReference type="PROSITE" id="PS51988">
    <property type="entry name" value="HERPESVIRUS_UL32"/>
    <property type="match status" value="1"/>
</dbReference>
<keyword id="KW-1035">Host cytoplasm</keyword>
<keyword id="KW-1048">Host nucleus</keyword>
<keyword id="KW-0479">Metal-binding</keyword>
<keyword id="KW-1185">Reference proteome</keyword>
<keyword id="KW-0862">Zinc</keyword>
<keyword id="KW-0863">Zinc-finger</keyword>
<feature type="chain" id="PRO_0000408436" description="Packaging protein UL32 homolog">
    <location>
        <begin position="1"/>
        <end position="484"/>
    </location>
</feature>
<feature type="region of interest" description="Zinc finger 1" evidence="2">
    <location>
        <begin position="74"/>
        <end position="154"/>
    </location>
</feature>
<feature type="region of interest" description="Zinc finger 2" evidence="2">
    <location>
        <begin position="286"/>
        <end position="390"/>
    </location>
</feature>
<feature type="binding site" evidence="2">
    <location>
        <position position="74"/>
    </location>
    <ligand>
        <name>Zn(2+)</name>
        <dbReference type="ChEBI" id="CHEBI:29105"/>
        <label>1</label>
    </ligand>
</feature>
<feature type="binding site" evidence="2">
    <location>
        <position position="77"/>
    </location>
    <ligand>
        <name>Zn(2+)</name>
        <dbReference type="ChEBI" id="CHEBI:29105"/>
        <label>1</label>
    </ligand>
</feature>
<feature type="binding site" evidence="2">
    <location>
        <position position="148"/>
    </location>
    <ligand>
        <name>Zn(2+)</name>
        <dbReference type="ChEBI" id="CHEBI:29105"/>
        <label>1</label>
    </ligand>
</feature>
<feature type="binding site" evidence="2">
    <location>
        <position position="154"/>
    </location>
    <ligand>
        <name>Zn(2+)</name>
        <dbReference type="ChEBI" id="CHEBI:29105"/>
        <label>1</label>
    </ligand>
</feature>
<feature type="binding site" evidence="2">
    <location>
        <position position="286"/>
    </location>
    <ligand>
        <name>Zn(2+)</name>
        <dbReference type="ChEBI" id="CHEBI:29105"/>
        <label>2</label>
    </ligand>
</feature>
<feature type="binding site" evidence="2">
    <location>
        <position position="289"/>
    </location>
    <ligand>
        <name>Zn(2+)</name>
        <dbReference type="ChEBI" id="CHEBI:29105"/>
        <label>2</label>
    </ligand>
</feature>
<feature type="binding site" evidence="2">
    <location>
        <position position="383"/>
    </location>
    <ligand>
        <name>Zn(2+)</name>
        <dbReference type="ChEBI" id="CHEBI:29105"/>
        <label>2</label>
    </ligand>
</feature>
<feature type="binding site" evidence="2">
    <location>
        <position position="390"/>
    </location>
    <ligand>
        <name>Zn(2+)</name>
        <dbReference type="ChEBI" id="CHEBI:29105"/>
        <label>2</label>
    </ligand>
</feature>
<name>UL32_HHV6Z</name>
<proteinExistence type="inferred from homology"/>
<evidence type="ECO:0000250" key="1"/>
<evidence type="ECO:0000255" key="2">
    <source>
        <dbReference type="PROSITE-ProRule" id="PRU01332"/>
    </source>
</evidence>
<evidence type="ECO:0000305" key="3"/>
<gene>
    <name type="primary">U36</name>
</gene>
<organismHost>
    <name type="scientific">Homo sapiens</name>
    <name type="common">Human</name>
    <dbReference type="NCBI Taxonomy" id="9606"/>
</organismHost>
<comment type="function">
    <text evidence="1">Plays a role in efficient localization of neo-synthesized capsids to nuclear replication compartments, thereby controlling cleavage and packaging of virus genomic DNA.</text>
</comment>
<comment type="subcellular location">
    <subcellularLocation>
        <location>Host cytoplasm</location>
    </subcellularLocation>
    <subcellularLocation>
        <location>Host nucleus</location>
    </subcellularLocation>
    <text evidence="1">Mainly cytoplasmic in transfected cell culture.</text>
</comment>
<comment type="similarity">
    <text evidence="3">Belongs to the herpesviridae UL32 protein family.</text>
</comment>
<reference key="1">
    <citation type="journal article" date="1999" name="J. Virol.">
        <title>Human herpesvirus 6B genome sequence: coding content and comparison with human herpesvirus 6A.</title>
        <authorList>
            <person name="Dominguez G."/>
            <person name="Dambaugh T.R."/>
            <person name="Stamey F.R."/>
            <person name="Dewhurst S."/>
            <person name="Inoue N."/>
            <person name="Pellett P.E."/>
        </authorList>
    </citation>
    <scope>NUCLEOTIDE SEQUENCE [LARGE SCALE GENOMIC DNA]</scope>
    <source>
        <strain>Z29</strain>
    </source>
</reference>
<accession>Q9QJ33</accession>
<organism>
    <name type="scientific">Human herpesvirus 6B (strain Z29)</name>
    <name type="common">HHV-6 variant B</name>
    <name type="synonym">Human B lymphotropic virus</name>
    <dbReference type="NCBI Taxonomy" id="36351"/>
    <lineage>
        <taxon>Viruses</taxon>
        <taxon>Duplodnaviria</taxon>
        <taxon>Heunggongvirae</taxon>
        <taxon>Peploviricota</taxon>
        <taxon>Herviviricetes</taxon>
        <taxon>Herpesvirales</taxon>
        <taxon>Orthoherpesviridae</taxon>
        <taxon>Betaherpesvirinae</taxon>
        <taxon>Roseolovirus</taxon>
        <taxon>Roseolovirus humanbeta6b</taxon>
        <taxon>Human herpesvirus 6B</taxon>
    </lineage>
</organism>